<evidence type="ECO:0000255" key="1">
    <source>
        <dbReference type="HAMAP-Rule" id="MF_00548"/>
    </source>
</evidence>
<name>ZUPT_SALPA</name>
<proteinExistence type="inferred from homology"/>
<accession>Q5PMU9</accession>
<sequence length="257" mass="26576">MSVPLILTLLAGAATFIGAFLGVLGQKPSNRMLAFSLGFAAGIMLLISLMEMLPAALDTEGMSPVLGYGMFIIGLLGYFGLDRLLPHAHPQDLVQKRQQPLPGSIKRTAILLTLGISLHNFPEGIATFVTASSNLELGFGIALAVALHNIPEGLAVAGPVYAATGSKRTAIFWAGISGMAEILGGVLAWLILGSLVSPIVMAAIMAAVAGIMVALSVDELMPLAKEIDPNNNPSYGVLCGMSIMGLSLVILQTIGIG</sequence>
<reference key="1">
    <citation type="journal article" date="2004" name="Nat. Genet.">
        <title>Comparison of genome degradation in Paratyphi A and Typhi, human-restricted serovars of Salmonella enterica that cause typhoid.</title>
        <authorList>
            <person name="McClelland M."/>
            <person name="Sanderson K.E."/>
            <person name="Clifton S.W."/>
            <person name="Latreille P."/>
            <person name="Porwollik S."/>
            <person name="Sabo A."/>
            <person name="Meyer R."/>
            <person name="Bieri T."/>
            <person name="Ozersky P."/>
            <person name="McLellan M."/>
            <person name="Harkins C.R."/>
            <person name="Wang C."/>
            <person name="Nguyen C."/>
            <person name="Berghoff A."/>
            <person name="Elliott G."/>
            <person name="Kohlberg S."/>
            <person name="Strong C."/>
            <person name="Du F."/>
            <person name="Carter J."/>
            <person name="Kremizki C."/>
            <person name="Layman D."/>
            <person name="Leonard S."/>
            <person name="Sun H."/>
            <person name="Fulton L."/>
            <person name="Nash W."/>
            <person name="Miner T."/>
            <person name="Minx P."/>
            <person name="Delehaunty K."/>
            <person name="Fronick C."/>
            <person name="Magrini V."/>
            <person name="Nhan M."/>
            <person name="Warren W."/>
            <person name="Florea L."/>
            <person name="Spieth J."/>
            <person name="Wilson R.K."/>
        </authorList>
    </citation>
    <scope>NUCLEOTIDE SEQUENCE [LARGE SCALE GENOMIC DNA]</scope>
    <source>
        <strain>ATCC 9150 / SARB42</strain>
    </source>
</reference>
<keyword id="KW-0997">Cell inner membrane</keyword>
<keyword id="KW-1003">Cell membrane</keyword>
<keyword id="KW-0406">Ion transport</keyword>
<keyword id="KW-0408">Iron</keyword>
<keyword id="KW-0472">Membrane</keyword>
<keyword id="KW-0479">Metal-binding</keyword>
<keyword id="KW-0812">Transmembrane</keyword>
<keyword id="KW-1133">Transmembrane helix</keyword>
<keyword id="KW-0813">Transport</keyword>
<keyword id="KW-0862">Zinc</keyword>
<keyword id="KW-0864">Zinc transport</keyword>
<protein>
    <recommendedName>
        <fullName evidence="1">Zinc transporter ZupT</fullName>
    </recommendedName>
</protein>
<gene>
    <name evidence="1" type="primary">zupT</name>
    <name type="ordered locus">SPA3059</name>
</gene>
<feature type="chain" id="PRO_1000017777" description="Zinc transporter ZupT">
    <location>
        <begin position="1"/>
        <end position="257"/>
    </location>
</feature>
<feature type="transmembrane region" description="Helical" evidence="1">
    <location>
        <begin position="5"/>
        <end position="25"/>
    </location>
</feature>
<feature type="transmembrane region" description="Helical" evidence="1">
    <location>
        <begin position="33"/>
        <end position="53"/>
    </location>
</feature>
<feature type="transmembrane region" description="Helical" evidence="1">
    <location>
        <begin position="61"/>
        <end position="81"/>
    </location>
</feature>
<feature type="transmembrane region" description="Helical" evidence="1">
    <location>
        <begin position="109"/>
        <end position="129"/>
    </location>
</feature>
<feature type="transmembrane region" description="Helical" evidence="1">
    <location>
        <begin position="137"/>
        <end position="157"/>
    </location>
</feature>
<feature type="transmembrane region" description="Helical" evidence="1">
    <location>
        <begin position="171"/>
        <end position="191"/>
    </location>
</feature>
<feature type="transmembrane region" description="Helical" evidence="1">
    <location>
        <begin position="195"/>
        <end position="215"/>
    </location>
</feature>
<feature type="transmembrane region" description="Helical" evidence="1">
    <location>
        <begin position="236"/>
        <end position="256"/>
    </location>
</feature>
<feature type="binding site" description="M2 metal binding site" evidence="1">
    <location>
        <position position="120"/>
    </location>
    <ligand>
        <name>Fe(2+)</name>
        <dbReference type="ChEBI" id="CHEBI:29033"/>
    </ligand>
</feature>
<feature type="binding site" description="M2 metal binding site" evidence="1">
    <location>
        <position position="123"/>
    </location>
    <ligand>
        <name>Fe(2+)</name>
        <dbReference type="ChEBI" id="CHEBI:29033"/>
    </ligand>
</feature>
<feature type="binding site" description="M1 metal binding site" evidence="1">
    <location>
        <position position="123"/>
    </location>
    <ligand>
        <name>Zn(2+)</name>
        <dbReference type="ChEBI" id="CHEBI:29105"/>
    </ligand>
</feature>
<feature type="binding site" description="M1 metal binding site" evidence="1">
    <location>
        <position position="148"/>
    </location>
    <ligand>
        <name>Zn(2+)</name>
        <dbReference type="ChEBI" id="CHEBI:29105"/>
    </ligand>
</feature>
<feature type="binding site" description="M2 metal binding site" evidence="1">
    <location>
        <position position="149"/>
    </location>
    <ligand>
        <name>Fe(2+)</name>
        <dbReference type="ChEBI" id="CHEBI:29033"/>
    </ligand>
</feature>
<feature type="binding site" description="M2 metal binding site" evidence="1">
    <location>
        <position position="152"/>
    </location>
    <ligand>
        <name>Fe(2+)</name>
        <dbReference type="ChEBI" id="CHEBI:29033"/>
    </ligand>
</feature>
<feature type="binding site" description="M1 metal binding site" evidence="1">
    <location>
        <position position="152"/>
    </location>
    <ligand>
        <name>Zn(2+)</name>
        <dbReference type="ChEBI" id="CHEBI:29105"/>
    </ligand>
</feature>
<feature type="binding site" description="M2 metal binding site" evidence="1">
    <location>
        <position position="181"/>
    </location>
    <ligand>
        <name>Fe(2+)</name>
        <dbReference type="ChEBI" id="CHEBI:29033"/>
    </ligand>
</feature>
<dbReference type="EMBL" id="CP000026">
    <property type="protein sequence ID" value="AAV78894.1"/>
    <property type="molecule type" value="Genomic_DNA"/>
</dbReference>
<dbReference type="RefSeq" id="WP_000115869.1">
    <property type="nucleotide sequence ID" value="NC_006511.1"/>
</dbReference>
<dbReference type="SMR" id="Q5PMU9"/>
<dbReference type="DNASU" id="3177498"/>
<dbReference type="KEGG" id="spt:SPA3059"/>
<dbReference type="HOGENOM" id="CLU_015114_1_3_6"/>
<dbReference type="Proteomes" id="UP000008185">
    <property type="component" value="Chromosome"/>
</dbReference>
<dbReference type="GO" id="GO:0005886">
    <property type="term" value="C:plasma membrane"/>
    <property type="evidence" value="ECO:0007669"/>
    <property type="project" value="UniProtKB-SubCell"/>
</dbReference>
<dbReference type="GO" id="GO:0046872">
    <property type="term" value="F:metal ion binding"/>
    <property type="evidence" value="ECO:0007669"/>
    <property type="project" value="UniProtKB-KW"/>
</dbReference>
<dbReference type="GO" id="GO:0005385">
    <property type="term" value="F:zinc ion transmembrane transporter activity"/>
    <property type="evidence" value="ECO:0007669"/>
    <property type="project" value="UniProtKB-UniRule"/>
</dbReference>
<dbReference type="HAMAP" id="MF_00548">
    <property type="entry name" value="ZupT"/>
    <property type="match status" value="1"/>
</dbReference>
<dbReference type="InterPro" id="IPR003689">
    <property type="entry name" value="ZIP"/>
</dbReference>
<dbReference type="InterPro" id="IPR023498">
    <property type="entry name" value="Zn_transptr_ZupT"/>
</dbReference>
<dbReference type="NCBIfam" id="NF003243">
    <property type="entry name" value="PRK04201.1"/>
    <property type="match status" value="1"/>
</dbReference>
<dbReference type="PANTHER" id="PTHR11040:SF205">
    <property type="entry name" value="ZINC TRANSPORTER ZUPT"/>
    <property type="match status" value="1"/>
</dbReference>
<dbReference type="PANTHER" id="PTHR11040">
    <property type="entry name" value="ZINC/IRON TRANSPORTER"/>
    <property type="match status" value="1"/>
</dbReference>
<dbReference type="Pfam" id="PF02535">
    <property type="entry name" value="Zip"/>
    <property type="match status" value="2"/>
</dbReference>
<organism>
    <name type="scientific">Salmonella paratyphi A (strain ATCC 9150 / SARB42)</name>
    <dbReference type="NCBI Taxonomy" id="295319"/>
    <lineage>
        <taxon>Bacteria</taxon>
        <taxon>Pseudomonadati</taxon>
        <taxon>Pseudomonadota</taxon>
        <taxon>Gammaproteobacteria</taxon>
        <taxon>Enterobacterales</taxon>
        <taxon>Enterobacteriaceae</taxon>
        <taxon>Salmonella</taxon>
    </lineage>
</organism>
<comment type="function">
    <text evidence="1">Mediates zinc uptake. May also transport other divalent cations.</text>
</comment>
<comment type="catalytic activity">
    <reaction evidence="1">
        <text>Zn(2+)(in) = Zn(2+)(out)</text>
        <dbReference type="Rhea" id="RHEA:29351"/>
        <dbReference type="ChEBI" id="CHEBI:29105"/>
    </reaction>
</comment>
<comment type="subcellular location">
    <subcellularLocation>
        <location evidence="1">Cell inner membrane</location>
        <topology evidence="1">Multi-pass membrane protein</topology>
    </subcellularLocation>
</comment>
<comment type="similarity">
    <text evidence="1">Belongs to the ZIP transporter (TC 2.A.5) family. ZupT subfamily.</text>
</comment>